<keyword id="KW-1003">Cell membrane</keyword>
<keyword id="KW-0406">Ion transport</keyword>
<keyword id="KW-0408">Iron</keyword>
<keyword id="KW-0410">Iron transport</keyword>
<keyword id="KW-0472">Membrane</keyword>
<keyword id="KW-0479">Metal-binding</keyword>
<keyword id="KW-1185">Reference proteome</keyword>
<keyword id="KW-0812">Transmembrane</keyword>
<keyword id="KW-1133">Transmembrane helix</keyword>
<keyword id="KW-0813">Transport</keyword>
<keyword id="KW-0832">Ubl conjugation</keyword>
<proteinExistence type="evidence at transcript level"/>
<organism>
    <name type="scientific">Rattus norvegicus</name>
    <name type="common">Rat</name>
    <dbReference type="NCBI Taxonomy" id="10116"/>
    <lineage>
        <taxon>Eukaryota</taxon>
        <taxon>Metazoa</taxon>
        <taxon>Chordata</taxon>
        <taxon>Craniata</taxon>
        <taxon>Vertebrata</taxon>
        <taxon>Euteleostomi</taxon>
        <taxon>Mammalia</taxon>
        <taxon>Eutheria</taxon>
        <taxon>Euarchontoglires</taxon>
        <taxon>Glires</taxon>
        <taxon>Rodentia</taxon>
        <taxon>Myomorpha</taxon>
        <taxon>Muroidea</taxon>
        <taxon>Muridae</taxon>
        <taxon>Murinae</taxon>
        <taxon>Rattus</taxon>
    </lineage>
</organism>
<gene>
    <name evidence="4" type="primary">Slc40a1</name>
    <name type="synonym">Fpn1</name>
    <name type="synonym">Fpt1</name>
</gene>
<name>S40A1_RAT</name>
<sequence length="570" mass="62616">MTKSRDQTHQEGCCGSLANYLTSAKFLLYLGHSLSTWGDRMWHFAVSVFLVELYGNSLLLTAVYGLVVAGSVLVLGAIIGDWVDKNARLKVAQTSLVVQNVSVILCGIILMMVFLHKNELLNMYHGWVLTVCYILIITIANIANLASTATAITIQRDWIVVVAGENRSRLADMNATIRRIDQLTNILAPMAVGQIMTFGSPVIGCGFISGWNLVSMCVEYFLLWKVYQKTPALAVKAALKVEESELKQLTSPKDTEPKPLEGTHLMGEKDSNIRELECEQEPTCASQIAEPFRTFRDGWVSYYNQPVFLAGMGLAFLYMTVLGFDCITTGYAYTQGLSGSILSVLMGASAITGIMGTVAFTWLRRKCGLVRTGLFSGLAQLSCLILCVISVFMPGSPLDLSVSPFEDIRSRFIHEEAVSSTTKIPETEMLMSNVSNVVNTVHEMSTKSVPIISVSLLFAGVIAARIGLWSFDLTVTQLLQENVIESERGIINGVQNSMNYLLDLLHFIMVILAPNPEAFGLLVLISVSFVAMGHLMYFRFAQKTLGNQIFVCAPDEKEVTDESQPNTSVV</sequence>
<accession>Q923U9</accession>
<accession>G3V6H7</accession>
<accession>Q9Z1C9</accession>
<dbReference type="EMBL" id="AF394785">
    <property type="protein sequence ID" value="AAK77858.2"/>
    <property type="molecule type" value="mRNA"/>
</dbReference>
<dbReference type="EMBL" id="U76714">
    <property type="protein sequence ID" value="AAD00260.1"/>
    <property type="status" value="ALT_FRAME"/>
    <property type="molecule type" value="mRNA"/>
</dbReference>
<dbReference type="EMBL" id="AABR07067583">
    <property type="status" value="NOT_ANNOTATED_CDS"/>
    <property type="molecule type" value="Genomic_DNA"/>
</dbReference>
<dbReference type="RefSeq" id="NP_579849.2">
    <property type="nucleotide sequence ID" value="NM_133315.2"/>
</dbReference>
<dbReference type="RefSeq" id="XP_017452293.1">
    <property type="nucleotide sequence ID" value="XM_017596804.1"/>
</dbReference>
<dbReference type="RefSeq" id="XP_038938916.1">
    <property type="nucleotide sequence ID" value="XM_039082988.2"/>
</dbReference>
<dbReference type="RefSeq" id="XP_063122683.1">
    <property type="nucleotide sequence ID" value="XM_063266613.1"/>
</dbReference>
<dbReference type="SMR" id="Q923U9"/>
<dbReference type="BioGRID" id="250996">
    <property type="interactions" value="5"/>
</dbReference>
<dbReference type="FunCoup" id="Q923U9">
    <property type="interactions" value="148"/>
</dbReference>
<dbReference type="STRING" id="10116.ENSRNOP00000005228"/>
<dbReference type="PhosphoSitePlus" id="Q923U9"/>
<dbReference type="PaxDb" id="10116-ENSRNOP00000005228"/>
<dbReference type="Ensembl" id="ENSRNOT00055007668">
    <property type="protein sequence ID" value="ENSRNOP00055005787"/>
    <property type="gene ID" value="ENSRNOG00055004811"/>
</dbReference>
<dbReference type="Ensembl" id="ENSRNOT00060028791">
    <property type="protein sequence ID" value="ENSRNOP00060023164"/>
    <property type="gene ID" value="ENSRNOG00060016832"/>
</dbReference>
<dbReference type="Ensembl" id="ENSRNOT00065051968">
    <property type="protein sequence ID" value="ENSRNOP00065042776"/>
    <property type="gene ID" value="ENSRNOG00065030099"/>
</dbReference>
<dbReference type="GeneID" id="170840"/>
<dbReference type="KEGG" id="rno:170840"/>
<dbReference type="UCSC" id="RGD:620180">
    <property type="organism name" value="rat"/>
</dbReference>
<dbReference type="AGR" id="RGD:620180"/>
<dbReference type="CTD" id="30061"/>
<dbReference type="RGD" id="620180">
    <property type="gene designation" value="Slc40a1"/>
</dbReference>
<dbReference type="VEuPathDB" id="HostDB:ENSRNOG00000003872"/>
<dbReference type="eggNOG" id="KOG2601">
    <property type="taxonomic scope" value="Eukaryota"/>
</dbReference>
<dbReference type="HOGENOM" id="CLU_020370_1_1_1"/>
<dbReference type="InParanoid" id="Q923U9"/>
<dbReference type="OrthoDB" id="648861at2759"/>
<dbReference type="PhylomeDB" id="Q923U9"/>
<dbReference type="TreeFam" id="TF313463"/>
<dbReference type="Reactome" id="R-RNO-425410">
    <property type="pathway name" value="Metal ion SLC transporters"/>
</dbReference>
<dbReference type="Reactome" id="R-RNO-917937">
    <property type="pathway name" value="Iron uptake and transport"/>
</dbReference>
<dbReference type="PRO" id="PR:Q923U9"/>
<dbReference type="Proteomes" id="UP000002494">
    <property type="component" value="Chromosome 9"/>
</dbReference>
<dbReference type="Bgee" id="ENSRNOG00000003872">
    <property type="expression patterns" value="Expressed in duodenum and 19 other cell types or tissues"/>
</dbReference>
<dbReference type="GO" id="GO:0016323">
    <property type="term" value="C:basolateral plasma membrane"/>
    <property type="evidence" value="ECO:0000266"/>
    <property type="project" value="RGD"/>
</dbReference>
<dbReference type="GO" id="GO:0005829">
    <property type="term" value="C:cytosol"/>
    <property type="evidence" value="ECO:0007669"/>
    <property type="project" value="Ensembl"/>
</dbReference>
<dbReference type="GO" id="GO:0005654">
    <property type="term" value="C:nucleoplasm"/>
    <property type="evidence" value="ECO:0007669"/>
    <property type="project" value="Ensembl"/>
</dbReference>
<dbReference type="GO" id="GO:0005886">
    <property type="term" value="C:plasma membrane"/>
    <property type="evidence" value="ECO:0000266"/>
    <property type="project" value="RGD"/>
</dbReference>
<dbReference type="GO" id="GO:0008021">
    <property type="term" value="C:synaptic vesicle"/>
    <property type="evidence" value="ECO:0000266"/>
    <property type="project" value="RGD"/>
</dbReference>
<dbReference type="GO" id="GO:0015093">
    <property type="term" value="F:ferrous iron transmembrane transporter activity"/>
    <property type="evidence" value="ECO:0000266"/>
    <property type="project" value="RGD"/>
</dbReference>
<dbReference type="GO" id="GO:0042802">
    <property type="term" value="F:identical protein binding"/>
    <property type="evidence" value="ECO:0000266"/>
    <property type="project" value="RGD"/>
</dbReference>
<dbReference type="GO" id="GO:0005381">
    <property type="term" value="F:iron ion transmembrane transporter activity"/>
    <property type="evidence" value="ECO:0000266"/>
    <property type="project" value="RGD"/>
</dbReference>
<dbReference type="GO" id="GO:0046872">
    <property type="term" value="F:metal ion binding"/>
    <property type="evidence" value="ECO:0007669"/>
    <property type="project" value="UniProtKB-KW"/>
</dbReference>
<dbReference type="GO" id="GO:0017046">
    <property type="term" value="F:peptide hormone binding"/>
    <property type="evidence" value="ECO:0000266"/>
    <property type="project" value="RGD"/>
</dbReference>
<dbReference type="GO" id="GO:0006915">
    <property type="term" value="P:apoptotic process"/>
    <property type="evidence" value="ECO:0000266"/>
    <property type="project" value="RGD"/>
</dbReference>
<dbReference type="GO" id="GO:0003158">
    <property type="term" value="P:endothelium development"/>
    <property type="evidence" value="ECO:0000266"/>
    <property type="project" value="RGD"/>
</dbReference>
<dbReference type="GO" id="GO:0051649">
    <property type="term" value="P:establishment of localization in cell"/>
    <property type="evidence" value="ECO:0000266"/>
    <property type="project" value="RGD"/>
</dbReference>
<dbReference type="GO" id="GO:0006879">
    <property type="term" value="P:intracellular iron ion homeostasis"/>
    <property type="evidence" value="ECO:0000266"/>
    <property type="project" value="RGD"/>
</dbReference>
<dbReference type="GO" id="GO:1903988">
    <property type="term" value="P:iron ion export across plasma membrane"/>
    <property type="evidence" value="ECO:0000250"/>
    <property type="project" value="UniProtKB"/>
</dbReference>
<dbReference type="GO" id="GO:0034755">
    <property type="term" value="P:iron ion transmembrane transport"/>
    <property type="evidence" value="ECO:0000266"/>
    <property type="project" value="RGD"/>
</dbReference>
<dbReference type="GO" id="GO:0006826">
    <property type="term" value="P:iron ion transport"/>
    <property type="evidence" value="ECO:0000266"/>
    <property type="project" value="RGD"/>
</dbReference>
<dbReference type="GO" id="GO:0002260">
    <property type="term" value="P:lymphocyte homeostasis"/>
    <property type="evidence" value="ECO:0000266"/>
    <property type="project" value="RGD"/>
</dbReference>
<dbReference type="GO" id="GO:0060586">
    <property type="term" value="P:multicellular organismal-level iron ion homeostasis"/>
    <property type="evidence" value="ECO:0000266"/>
    <property type="project" value="RGD"/>
</dbReference>
<dbReference type="GO" id="GO:0043066">
    <property type="term" value="P:negative regulation of apoptotic process"/>
    <property type="evidence" value="ECO:0000266"/>
    <property type="project" value="RGD"/>
</dbReference>
<dbReference type="GO" id="GO:0045944">
    <property type="term" value="P:positive regulation of transcription by RNA polymerase II"/>
    <property type="evidence" value="ECO:0000266"/>
    <property type="project" value="RGD"/>
</dbReference>
<dbReference type="GO" id="GO:0048536">
    <property type="term" value="P:spleen development"/>
    <property type="evidence" value="ECO:0000266"/>
    <property type="project" value="RGD"/>
</dbReference>
<dbReference type="GO" id="GO:0060345">
    <property type="term" value="P:spleen trabecula formation"/>
    <property type="evidence" value="ECO:0000266"/>
    <property type="project" value="RGD"/>
</dbReference>
<dbReference type="GO" id="GO:0006366">
    <property type="term" value="P:transcription by RNA polymerase II"/>
    <property type="evidence" value="ECO:0000266"/>
    <property type="project" value="RGD"/>
</dbReference>
<dbReference type="CDD" id="cd17480">
    <property type="entry name" value="MFS_SLC40A1_like"/>
    <property type="match status" value="1"/>
</dbReference>
<dbReference type="Gene3D" id="1.20.1250.20">
    <property type="entry name" value="MFS general substrate transporter like domains"/>
    <property type="match status" value="1"/>
</dbReference>
<dbReference type="InterPro" id="IPR009716">
    <property type="entry name" value="Ferroportin-1"/>
</dbReference>
<dbReference type="InterPro" id="IPR036259">
    <property type="entry name" value="MFS_trans_sf"/>
</dbReference>
<dbReference type="PANTHER" id="PTHR11660">
    <property type="entry name" value="SOLUTE CARRIER FAMILY 40 MEMBER"/>
    <property type="match status" value="1"/>
</dbReference>
<dbReference type="PANTHER" id="PTHR11660:SF47">
    <property type="entry name" value="SOLUTE CARRIER FAMILY 40 MEMBER 1"/>
    <property type="match status" value="1"/>
</dbReference>
<dbReference type="Pfam" id="PF06963">
    <property type="entry name" value="FPN1"/>
    <property type="match status" value="1"/>
</dbReference>
<dbReference type="SUPFAM" id="SSF103473">
    <property type="entry name" value="MFS general substrate transporter"/>
    <property type="match status" value="1"/>
</dbReference>
<feature type="chain" id="PRO_0000191312" description="Ferroportin">
    <location>
        <begin position="1"/>
        <end position="570"/>
    </location>
</feature>
<feature type="topological domain" description="Cytoplasmic" evidence="2">
    <location>
        <begin position="1"/>
        <end position="23"/>
    </location>
</feature>
<feature type="transmembrane region" description="Helical" evidence="2">
    <location>
        <begin position="24"/>
        <end position="53"/>
    </location>
</feature>
<feature type="topological domain" description="Extracellular" evidence="2">
    <location>
        <begin position="54"/>
        <end position="57"/>
    </location>
</feature>
<feature type="transmembrane region" description="Helical" evidence="2">
    <location>
        <begin position="58"/>
        <end position="84"/>
    </location>
</feature>
<feature type="topological domain" description="Cytoplasmic" evidence="2">
    <location>
        <begin position="85"/>
        <end position="87"/>
    </location>
</feature>
<feature type="transmembrane region" description="Helical" evidence="2">
    <location>
        <begin position="88"/>
        <end position="118"/>
    </location>
</feature>
<feature type="topological domain" description="Extracellular" evidence="2">
    <location>
        <begin position="119"/>
        <end position="126"/>
    </location>
</feature>
<feature type="transmembrane region" description="Helical" evidence="2">
    <location>
        <begin position="127"/>
        <end position="162"/>
    </location>
</feature>
<feature type="topological domain" description="Cytoplasmic" evidence="2">
    <location>
        <begin position="163"/>
        <end position="164"/>
    </location>
</feature>
<feature type="transmembrane region" description="Helical" evidence="2">
    <location>
        <begin position="165"/>
        <end position="195"/>
    </location>
</feature>
<feature type="topological domain" description="Extracellular" evidence="2">
    <location>
        <begin position="196"/>
        <end position="202"/>
    </location>
</feature>
<feature type="transmembrane region" description="Helical" evidence="2">
    <location>
        <begin position="203"/>
        <end position="229"/>
    </location>
</feature>
<feature type="topological domain" description="Cytoplasmic" evidence="2">
    <location>
        <begin position="230"/>
        <end position="306"/>
    </location>
</feature>
<feature type="transmembrane region" description="Helical" evidence="2">
    <location>
        <begin position="307"/>
        <end position="333"/>
    </location>
</feature>
<feature type="topological domain" description="Extracellular" evidence="2">
    <location>
        <begin position="334"/>
        <end position="338"/>
    </location>
</feature>
<feature type="transmembrane region" description="Helical" evidence="2">
    <location>
        <begin position="339"/>
        <end position="366"/>
    </location>
</feature>
<feature type="topological domain" description="Cytoplasmic" evidence="2">
    <location>
        <begin position="367"/>
        <end position="368"/>
    </location>
</feature>
<feature type="transmembrane region" description="Helical" evidence="2">
    <location>
        <begin position="369"/>
        <end position="391"/>
    </location>
</feature>
<feature type="topological domain" description="Extracellular" evidence="2">
    <location>
        <begin position="392"/>
        <end position="452"/>
    </location>
</feature>
<feature type="transmembrane region" description="Helical" evidence="2">
    <location>
        <begin position="453"/>
        <end position="482"/>
    </location>
</feature>
<feature type="topological domain" description="Cytoplasmic" evidence="2">
    <location>
        <begin position="483"/>
        <end position="487"/>
    </location>
</feature>
<feature type="transmembrane region" description="Helical" evidence="2">
    <location>
        <begin position="488"/>
        <end position="512"/>
    </location>
</feature>
<feature type="topological domain" description="Extracellular" evidence="2">
    <location>
        <begin position="513"/>
        <end position="515"/>
    </location>
</feature>
<feature type="transmembrane region" description="Helical" evidence="2">
    <location>
        <begin position="516"/>
        <end position="541"/>
    </location>
</feature>
<feature type="topological domain" description="Cytoplasmic" evidence="2">
    <location>
        <begin position="542"/>
        <end position="570"/>
    </location>
</feature>
<feature type="binding site" evidence="2">
    <location>
        <position position="39"/>
    </location>
    <ligand>
        <name>Fe cation</name>
        <dbReference type="ChEBI" id="CHEBI:24875"/>
        <label>1</label>
    </ligand>
</feature>
<feature type="binding site" evidence="2">
    <location>
        <position position="43"/>
    </location>
    <ligand>
        <name>Fe cation</name>
        <dbReference type="ChEBI" id="CHEBI:24875"/>
        <label>1</label>
    </ligand>
</feature>
<feature type="binding site" evidence="2">
    <location>
        <position position="326"/>
    </location>
    <ligand>
        <name>Fe cation</name>
        <dbReference type="ChEBI" id="CHEBI:24875"/>
        <label>2</label>
    </ligand>
</feature>
<feature type="binding site" evidence="2">
    <location>
        <position position="506"/>
    </location>
    <ligand>
        <name>Fe cation</name>
        <dbReference type="ChEBI" id="CHEBI:24875"/>
        <label>2</label>
    </ligand>
</feature>
<feature type="sequence conflict" description="In Ref. 1; AAK77858." evidence="3" ref="1">
    <original>S</original>
    <variation>G</variation>
    <location>
        <position position="57"/>
    </location>
</feature>
<feature type="sequence conflict" description="In Ref. 3." evidence="3" ref="3">
    <original>TTG</original>
    <variation>ATV</variation>
    <location>
        <begin position="328"/>
        <end position="330"/>
    </location>
</feature>
<protein>
    <recommendedName>
        <fullName evidence="2">Ferroportin</fullName>
    </recommendedName>
    <alternativeName>
        <fullName>CAR1</fullName>
    </alternativeName>
    <alternativeName>
        <fullName>Cell adhesion regulator</fullName>
    </alternativeName>
    <alternativeName>
        <fullName>Ferroportin-1</fullName>
    </alternativeName>
    <alternativeName>
        <fullName evidence="4">Solute carrier family 40 member 1</fullName>
    </alternativeName>
</protein>
<reference key="1">
    <citation type="submission" date="2002-02" db="EMBL/GenBank/DDBJ databases">
        <title>Iron induces ferroportin 1 (FPT1) clustering and redistribution in rat intestinal epithelial cells.</title>
        <authorList>
            <person name="Yeh K.-Y."/>
            <person name="Yeh M."/>
            <person name="Glass J."/>
        </authorList>
    </citation>
    <scope>NUCLEOTIDE SEQUENCE [MRNA]</scope>
    <source>
        <strain>Sprague-Dawley</strain>
    </source>
</reference>
<reference key="2">
    <citation type="journal article" date="2004" name="Nature">
        <title>Genome sequence of the Brown Norway rat yields insights into mammalian evolution.</title>
        <authorList>
            <person name="Gibbs R.A."/>
            <person name="Weinstock G.M."/>
            <person name="Metzker M.L."/>
            <person name="Muzny D.M."/>
            <person name="Sodergren E.J."/>
            <person name="Scherer S."/>
            <person name="Scott G."/>
            <person name="Steffen D."/>
            <person name="Worley K.C."/>
            <person name="Burch P.E."/>
            <person name="Okwuonu G."/>
            <person name="Hines S."/>
            <person name="Lewis L."/>
            <person name="Deramo C."/>
            <person name="Delgado O."/>
            <person name="Dugan-Rocha S."/>
            <person name="Miner G."/>
            <person name="Morgan M."/>
            <person name="Hawes A."/>
            <person name="Gill R."/>
            <person name="Holt R.A."/>
            <person name="Adams M.D."/>
            <person name="Amanatides P.G."/>
            <person name="Baden-Tillson H."/>
            <person name="Barnstead M."/>
            <person name="Chin S."/>
            <person name="Evans C.A."/>
            <person name="Ferriera S."/>
            <person name="Fosler C."/>
            <person name="Glodek A."/>
            <person name="Gu Z."/>
            <person name="Jennings D."/>
            <person name="Kraft C.L."/>
            <person name="Nguyen T."/>
            <person name="Pfannkoch C.M."/>
            <person name="Sitter C."/>
            <person name="Sutton G.G."/>
            <person name="Venter J.C."/>
            <person name="Woodage T."/>
            <person name="Smith D."/>
            <person name="Lee H.-M."/>
            <person name="Gustafson E."/>
            <person name="Cahill P."/>
            <person name="Kana A."/>
            <person name="Doucette-Stamm L."/>
            <person name="Weinstock K."/>
            <person name="Fechtel K."/>
            <person name="Weiss R.B."/>
            <person name="Dunn D.M."/>
            <person name="Green E.D."/>
            <person name="Blakesley R.W."/>
            <person name="Bouffard G.G."/>
            <person name="De Jong P.J."/>
            <person name="Osoegawa K."/>
            <person name="Zhu B."/>
            <person name="Marra M."/>
            <person name="Schein J."/>
            <person name="Bosdet I."/>
            <person name="Fjell C."/>
            <person name="Jones S."/>
            <person name="Krzywinski M."/>
            <person name="Mathewson C."/>
            <person name="Siddiqui A."/>
            <person name="Wye N."/>
            <person name="McPherson J."/>
            <person name="Zhao S."/>
            <person name="Fraser C.M."/>
            <person name="Shetty J."/>
            <person name="Shatsman S."/>
            <person name="Geer K."/>
            <person name="Chen Y."/>
            <person name="Abramzon S."/>
            <person name="Nierman W.C."/>
            <person name="Havlak P.H."/>
            <person name="Chen R."/>
            <person name="Durbin K.J."/>
            <person name="Egan A."/>
            <person name="Ren Y."/>
            <person name="Song X.-Z."/>
            <person name="Li B."/>
            <person name="Liu Y."/>
            <person name="Qin X."/>
            <person name="Cawley S."/>
            <person name="Cooney A.J."/>
            <person name="D'Souza L.M."/>
            <person name="Martin K."/>
            <person name="Wu J.Q."/>
            <person name="Gonzalez-Garay M.L."/>
            <person name="Jackson A.R."/>
            <person name="Kalafus K.J."/>
            <person name="McLeod M.P."/>
            <person name="Milosavljevic A."/>
            <person name="Virk D."/>
            <person name="Volkov A."/>
            <person name="Wheeler D.A."/>
            <person name="Zhang Z."/>
            <person name="Bailey J.A."/>
            <person name="Eichler E.E."/>
            <person name="Tuzun E."/>
            <person name="Birney E."/>
            <person name="Mongin E."/>
            <person name="Ureta-Vidal A."/>
            <person name="Woodwark C."/>
            <person name="Zdobnov E."/>
            <person name="Bork P."/>
            <person name="Suyama M."/>
            <person name="Torrents D."/>
            <person name="Alexandersson M."/>
            <person name="Trask B.J."/>
            <person name="Young J.M."/>
            <person name="Huang H."/>
            <person name="Wang H."/>
            <person name="Xing H."/>
            <person name="Daniels S."/>
            <person name="Gietzen D."/>
            <person name="Schmidt J."/>
            <person name="Stevens K."/>
            <person name="Vitt U."/>
            <person name="Wingrove J."/>
            <person name="Camara F."/>
            <person name="Mar Alba M."/>
            <person name="Abril J.F."/>
            <person name="Guigo R."/>
            <person name="Smit A."/>
            <person name="Dubchak I."/>
            <person name="Rubin E.M."/>
            <person name="Couronne O."/>
            <person name="Poliakov A."/>
            <person name="Huebner N."/>
            <person name="Ganten D."/>
            <person name="Goesele C."/>
            <person name="Hummel O."/>
            <person name="Kreitler T."/>
            <person name="Lee Y.-A."/>
            <person name="Monti J."/>
            <person name="Schulz H."/>
            <person name="Zimdahl H."/>
            <person name="Himmelbauer H."/>
            <person name="Lehrach H."/>
            <person name="Jacob H.J."/>
            <person name="Bromberg S."/>
            <person name="Gullings-Handley J."/>
            <person name="Jensen-Seaman M.I."/>
            <person name="Kwitek A.E."/>
            <person name="Lazar J."/>
            <person name="Pasko D."/>
            <person name="Tonellato P.J."/>
            <person name="Twigger S."/>
            <person name="Ponting C.P."/>
            <person name="Duarte J.M."/>
            <person name="Rice S."/>
            <person name="Goodstadt L."/>
            <person name="Beatson S.A."/>
            <person name="Emes R.D."/>
            <person name="Winter E.E."/>
            <person name="Webber C."/>
            <person name="Brandt P."/>
            <person name="Nyakatura G."/>
            <person name="Adetobi M."/>
            <person name="Chiaromonte F."/>
            <person name="Elnitski L."/>
            <person name="Eswara P."/>
            <person name="Hardison R.C."/>
            <person name="Hou M."/>
            <person name="Kolbe D."/>
            <person name="Makova K."/>
            <person name="Miller W."/>
            <person name="Nekrutenko A."/>
            <person name="Riemer C."/>
            <person name="Schwartz S."/>
            <person name="Taylor J."/>
            <person name="Yang S."/>
            <person name="Zhang Y."/>
            <person name="Lindpaintner K."/>
            <person name="Andrews T.D."/>
            <person name="Caccamo M."/>
            <person name="Clamp M."/>
            <person name="Clarke L."/>
            <person name="Curwen V."/>
            <person name="Durbin R.M."/>
            <person name="Eyras E."/>
            <person name="Searle S.M."/>
            <person name="Cooper G.M."/>
            <person name="Batzoglou S."/>
            <person name="Brudno M."/>
            <person name="Sidow A."/>
            <person name="Stone E.A."/>
            <person name="Payseur B.A."/>
            <person name="Bourque G."/>
            <person name="Lopez-Otin C."/>
            <person name="Puente X.S."/>
            <person name="Chakrabarti K."/>
            <person name="Chatterji S."/>
            <person name="Dewey C."/>
            <person name="Pachter L."/>
            <person name="Bray N."/>
            <person name="Yap V.B."/>
            <person name="Caspi A."/>
            <person name="Tesler G."/>
            <person name="Pevzner P.A."/>
            <person name="Haussler D."/>
            <person name="Roskin K.M."/>
            <person name="Baertsch R."/>
            <person name="Clawson H."/>
            <person name="Furey T.S."/>
            <person name="Hinrichs A.S."/>
            <person name="Karolchik D."/>
            <person name="Kent W.J."/>
            <person name="Rosenbloom K.R."/>
            <person name="Trumbower H."/>
            <person name="Weirauch M."/>
            <person name="Cooper D.N."/>
            <person name="Stenson P.D."/>
            <person name="Ma B."/>
            <person name="Brent M."/>
            <person name="Arumugam M."/>
            <person name="Shteynberg D."/>
            <person name="Copley R.R."/>
            <person name="Taylor M.S."/>
            <person name="Riethman H."/>
            <person name="Mudunuri U."/>
            <person name="Peterson J."/>
            <person name="Guyer M."/>
            <person name="Felsenfeld A."/>
            <person name="Old S."/>
            <person name="Mockrin S."/>
            <person name="Collins F.S."/>
        </authorList>
    </citation>
    <scope>NUCLEOTIDE SEQUENCE [LARGE SCALE GENOMIC DNA]</scope>
    <source>
        <strain>Brown Norway</strain>
    </source>
</reference>
<reference key="3">
    <citation type="submission" date="1996-10" db="EMBL/GenBank/DDBJ databases">
        <authorList>
            <person name="Yang X.Z."/>
        </authorList>
    </citation>
    <scope>NUCLEOTIDE SEQUENCE [MRNA]</scope>
</reference>
<comment type="function">
    <text evidence="1 2">Transports Fe(2+) from the inside of a cell to the outside of the cell, playing a key role for maintaining systemic iron homeostasis (By similarity). Transports iron from intestinal, splenic, hepatic cells, macrophages and erythrocytes into the blood to provide iron to other tissues. Controls therefore dietary iron uptake, iron recycling by macrophages and erythrocytes, and release of iron stores in hepatocytes (By similarity). When iron is in excess in serum, circulating HAMP/hepcidin levels increase resulting in a degradation of SLC40A1, thus limiting the iron efflux to plasma (By similarity).</text>
</comment>
<comment type="catalytic activity">
    <reaction evidence="2">
        <text>Fe(2+)(in) = Fe(2+)(out)</text>
        <dbReference type="Rhea" id="RHEA:28486"/>
        <dbReference type="ChEBI" id="CHEBI:29033"/>
    </reaction>
</comment>
<comment type="activity regulation">
    <text evidence="2">During elevated serum iron levels, liver-derived hepcidin/HAMP negatively regulates cell surface SLC40A1 by inducing its ubiquitination, internalization, and degradation. Indeed, hepcidin/HAMP affinity towards ferroportin/SLC40A1 increases by 80-fold in the presence of iron.</text>
</comment>
<comment type="subunit">
    <text evidence="2">Identified in a complex with STOM. Interacts with HAMP; affinity of the peptide hormone HAMP for SLC40A1 increases by 80-fold in the presence of iron and the interaction promotes SLC40A1 ubiquitination and degradation. Part of a complex composed of SLC40A1/ferroportin, TF/transferrin and HEPH/hephaestin that transfers iron from cells to transferrin.</text>
</comment>
<comment type="subcellular location">
    <subcellularLocation>
        <location evidence="2">Cell membrane</location>
        <topology evidence="2">Multi-pass membrane protein</topology>
    </subcellularLocation>
    <subcellularLocation>
        <location evidence="2">Basolateral cell membrane</location>
        <topology evidence="2">Multi-pass membrane protein</topology>
    </subcellularLocation>
    <text evidence="2">Localized to the basolateral membrane of polarized epithelial cells.</text>
</comment>
<comment type="PTM">
    <text evidence="1 2">Polyubiquitinated by RNF217; leading to proteasomal degradation (By similarity). Under conditions of high systemic iron levels, both the hormone peptide hepcidin/HAMP and holo(iron bound)-transferrin/TF induce the ubiquitination, internalization and proteasomal degradation of SLC40A1 to control iron release from cells (By similarity).</text>
</comment>
<comment type="similarity">
    <text evidence="3">Belongs to the ferroportin (FP) (TC 2.A.100) family. SLC40A subfamily.</text>
</comment>
<comment type="caution">
    <text evidence="1 2 3">Manganese (Mn) transport by SLC40A1 remains controversial. Some in vitro studies have suggested that SLC40A1 transports minimal amounts of Mn(2+) (By similarity). Other groups have suggested that it does not. The affinity of SLC40A1 for manganese is extremely low compared with iron, implying that any SLC40A1-mediated Mn transport in vivo would likely be trivial (By similarity). A recent study examined the role of SLC40A1 in Mn homeostasis by using Tmprss6-O mice, which express high levels of hepcidin/HAMP and therefore have very low SLC40A1 levels in their tissues. These mice show frank iron deficiency and reduced iron levels in most tissues, but manganese levels are largely unaffected (By similarity). These studies suggest that manganese is propably not the physiological substrate of SLC40A1.</text>
</comment>
<comment type="sequence caution" evidence="3">
    <conflict type="frameshift">
        <sequence resource="EMBL-CDS" id="AAD00260"/>
    </conflict>
</comment>
<evidence type="ECO:0000250" key="1">
    <source>
        <dbReference type="UniProtKB" id="Q9JHI9"/>
    </source>
</evidence>
<evidence type="ECO:0000250" key="2">
    <source>
        <dbReference type="UniProtKB" id="Q9NP59"/>
    </source>
</evidence>
<evidence type="ECO:0000305" key="3"/>
<evidence type="ECO:0000312" key="4">
    <source>
        <dbReference type="RGD" id="620180"/>
    </source>
</evidence>